<dbReference type="EMBL" id="CP001396">
    <property type="protein sequence ID" value="ACR62423.1"/>
    <property type="molecule type" value="Genomic_DNA"/>
</dbReference>
<dbReference type="RefSeq" id="WP_001295770.1">
    <property type="nucleotide sequence ID" value="NC_012759.1"/>
</dbReference>
<dbReference type="SMR" id="C4ZQ03"/>
<dbReference type="GeneID" id="75202102"/>
<dbReference type="KEGG" id="ebw:BWG_0076"/>
<dbReference type="HOGENOM" id="CLU_107907_2_0_6"/>
<dbReference type="GO" id="GO:0005737">
    <property type="term" value="C:cytoplasm"/>
    <property type="evidence" value="ECO:0007669"/>
    <property type="project" value="UniProtKB-UniRule"/>
</dbReference>
<dbReference type="GO" id="GO:0009295">
    <property type="term" value="C:nucleoid"/>
    <property type="evidence" value="ECO:0007669"/>
    <property type="project" value="UniProtKB-SubCell"/>
</dbReference>
<dbReference type="GO" id="GO:0003700">
    <property type="term" value="F:DNA-binding transcription factor activity"/>
    <property type="evidence" value="ECO:0007669"/>
    <property type="project" value="UniProtKB-UniRule"/>
</dbReference>
<dbReference type="GO" id="GO:0000976">
    <property type="term" value="F:transcription cis-regulatory region binding"/>
    <property type="evidence" value="ECO:0007669"/>
    <property type="project" value="TreeGrafter"/>
</dbReference>
<dbReference type="GO" id="GO:2000143">
    <property type="term" value="P:negative regulation of DNA-templated transcription initiation"/>
    <property type="evidence" value="ECO:0007669"/>
    <property type="project" value="TreeGrafter"/>
</dbReference>
<dbReference type="CDD" id="cd16321">
    <property type="entry name" value="MraZ_C"/>
    <property type="match status" value="1"/>
</dbReference>
<dbReference type="CDD" id="cd16320">
    <property type="entry name" value="MraZ_N"/>
    <property type="match status" value="1"/>
</dbReference>
<dbReference type="FunFam" id="3.40.1550.20:FF:000001">
    <property type="entry name" value="Transcriptional regulator MraZ"/>
    <property type="match status" value="1"/>
</dbReference>
<dbReference type="Gene3D" id="3.40.1550.20">
    <property type="entry name" value="Transcriptional regulator MraZ domain"/>
    <property type="match status" value="1"/>
</dbReference>
<dbReference type="HAMAP" id="MF_01008">
    <property type="entry name" value="MraZ"/>
    <property type="match status" value="1"/>
</dbReference>
<dbReference type="InterPro" id="IPR003444">
    <property type="entry name" value="MraZ"/>
</dbReference>
<dbReference type="InterPro" id="IPR035644">
    <property type="entry name" value="MraZ_C"/>
</dbReference>
<dbReference type="InterPro" id="IPR020603">
    <property type="entry name" value="MraZ_dom"/>
</dbReference>
<dbReference type="InterPro" id="IPR035642">
    <property type="entry name" value="MraZ_N"/>
</dbReference>
<dbReference type="InterPro" id="IPR038619">
    <property type="entry name" value="MraZ_sf"/>
</dbReference>
<dbReference type="InterPro" id="IPR007159">
    <property type="entry name" value="SpoVT-AbrB_dom"/>
</dbReference>
<dbReference type="InterPro" id="IPR037914">
    <property type="entry name" value="SpoVT-AbrB_sf"/>
</dbReference>
<dbReference type="NCBIfam" id="TIGR00242">
    <property type="entry name" value="division/cell wall cluster transcriptional repressor MraZ"/>
    <property type="match status" value="1"/>
</dbReference>
<dbReference type="PANTHER" id="PTHR34701">
    <property type="entry name" value="TRANSCRIPTIONAL REGULATOR MRAZ"/>
    <property type="match status" value="1"/>
</dbReference>
<dbReference type="PANTHER" id="PTHR34701:SF1">
    <property type="entry name" value="TRANSCRIPTIONAL REGULATOR MRAZ"/>
    <property type="match status" value="1"/>
</dbReference>
<dbReference type="Pfam" id="PF02381">
    <property type="entry name" value="MraZ"/>
    <property type="match status" value="2"/>
</dbReference>
<dbReference type="SUPFAM" id="SSF89447">
    <property type="entry name" value="AbrB/MazE/MraZ-like"/>
    <property type="match status" value="1"/>
</dbReference>
<dbReference type="PROSITE" id="PS51740">
    <property type="entry name" value="SPOVT_ABRB"/>
    <property type="match status" value="2"/>
</dbReference>
<organism>
    <name type="scientific">Escherichia coli (strain K12 / MC4100 / BW2952)</name>
    <dbReference type="NCBI Taxonomy" id="595496"/>
    <lineage>
        <taxon>Bacteria</taxon>
        <taxon>Pseudomonadati</taxon>
        <taxon>Pseudomonadota</taxon>
        <taxon>Gammaproteobacteria</taxon>
        <taxon>Enterobacterales</taxon>
        <taxon>Enterobacteriaceae</taxon>
        <taxon>Escherichia</taxon>
    </lineage>
</organism>
<keyword id="KW-0963">Cytoplasm</keyword>
<keyword id="KW-0238">DNA-binding</keyword>
<keyword id="KW-0677">Repeat</keyword>
<keyword id="KW-0678">Repressor</keyword>
<keyword id="KW-0804">Transcription</keyword>
<keyword id="KW-0805">Transcription regulation</keyword>
<protein>
    <recommendedName>
        <fullName>Transcriptional regulator MraZ</fullName>
    </recommendedName>
</protein>
<name>MRAZ_ECOBW</name>
<proteinExistence type="inferred from homology"/>
<feature type="chain" id="PRO_1000213174" description="Transcriptional regulator MraZ">
    <location>
        <begin position="1"/>
        <end position="152"/>
    </location>
</feature>
<feature type="domain" description="SpoVT-AbrB 1" evidence="2">
    <location>
        <begin position="5"/>
        <end position="52"/>
    </location>
</feature>
<feature type="domain" description="SpoVT-AbrB 2" evidence="2">
    <location>
        <begin position="81"/>
        <end position="124"/>
    </location>
</feature>
<accession>C4ZQ03</accession>
<comment type="function">
    <text evidence="1">Negatively regulates its own expression and that of the subsequent genes in the proximal part of the division and cell wall (dcw) gene cluster. Acts by binding directly to DNA. May also regulate the expression of genes outside the dcw cluster.</text>
</comment>
<comment type="subunit">
    <text evidence="1">Forms oligomers.</text>
</comment>
<comment type="subcellular location">
    <subcellularLocation>
        <location evidence="1">Cytoplasm</location>
        <location evidence="1">Nucleoid</location>
    </subcellularLocation>
</comment>
<comment type="similarity">
    <text evidence="1">Belongs to the MraZ family.</text>
</comment>
<evidence type="ECO:0000255" key="1">
    <source>
        <dbReference type="HAMAP-Rule" id="MF_01008"/>
    </source>
</evidence>
<evidence type="ECO:0000255" key="2">
    <source>
        <dbReference type="PROSITE-ProRule" id="PRU01076"/>
    </source>
</evidence>
<reference key="1">
    <citation type="journal article" date="2009" name="J. Bacteriol.">
        <title>Genomic sequencing reveals regulatory mutations and recombinational events in the widely used MC4100 lineage of Escherichia coli K-12.</title>
        <authorList>
            <person name="Ferenci T."/>
            <person name="Zhou Z."/>
            <person name="Betteridge T."/>
            <person name="Ren Y."/>
            <person name="Liu Y."/>
            <person name="Feng L."/>
            <person name="Reeves P.R."/>
            <person name="Wang L."/>
        </authorList>
    </citation>
    <scope>NUCLEOTIDE SEQUENCE [LARGE SCALE GENOMIC DNA]</scope>
    <source>
        <strain>K12 / MC4100 / BW2952</strain>
    </source>
</reference>
<gene>
    <name evidence="1" type="primary">mraZ</name>
    <name type="ordered locus">BWG_0076</name>
</gene>
<sequence>MFRGATLVNLDSKGRLSVPTRYREQLLENAAGQMVCTIDIHHPCLLLYPLPEWEIIEQKLSRLSSMNPVERRVQRLLLGHASECQMDGAGRLLIAPVLRQHAGLTKEVMLVGQFNKFELWDETTWHQQVKEDIDAEQLATGDLSERLQDLSL</sequence>